<comment type="function">
    <text evidence="1 5 6">Bifunctional axonal guidance cue regulated by sulfated proteoglycans; attractive effects result from interactions with heparan sulfate proteoglycans (HSPGs), while the inhibitory effects depend on interactions with chondroitin sulfate proteoglycans (CSPGs). Ligand for receptor PLXNB3. In glioma cells, SEMA5A stimulation of PLXNB3 results in the disassembly of F-actin stress fibers, disruption of focal adhesions and cellular collapse as well as inhibition of cell migration and invasion through ARHGDIA-mediated inactivation of RAC1. May promote angiogenesis by increasing endothelial cell proliferation and migration and inhibiting apoptosis.</text>
</comment>
<comment type="subunit">
    <text evidence="1">Binds PLXNB3.</text>
</comment>
<comment type="subcellular location">
    <subcellularLocation>
        <location evidence="2">Membrane</location>
        <topology evidence="2">Single-pass membrane protein</topology>
    </subcellularLocation>
</comment>
<comment type="developmental stage">
    <text evidence="5">At 15.5 dpc, detected in axons extending from habenula nucleus explants (at protein level). Expressed in the habenula nucleus at 13.5 dpc and 15.5 dpc, and in the prosomere 2 adjacent to the fasciculus retroflexus at 15.5 dpc.</text>
</comment>
<feature type="signal peptide" evidence="2">
    <location>
        <begin position="1"/>
        <end position="22"/>
    </location>
</feature>
<feature type="chain" id="PRO_0000420236" description="Semaphorin-5A" evidence="2">
    <location>
        <begin position="23"/>
        <end position="1074"/>
    </location>
</feature>
<feature type="transmembrane region" description="Helical" evidence="2">
    <location>
        <begin position="969"/>
        <end position="989"/>
    </location>
</feature>
<feature type="domain" description="Sema" evidence="4">
    <location>
        <begin position="35"/>
        <end position="484"/>
    </location>
</feature>
<feature type="domain" description="PSI" evidence="2">
    <location>
        <begin position="486"/>
        <end position="533"/>
    </location>
</feature>
<feature type="domain" description="TSP type-1 1" evidence="3">
    <location>
        <begin position="540"/>
        <end position="593"/>
    </location>
</feature>
<feature type="domain" description="TSP type-1 2" evidence="3">
    <location>
        <begin position="595"/>
        <end position="651"/>
    </location>
</feature>
<feature type="domain" description="TSP type-1 3" evidence="3">
    <location>
        <begin position="653"/>
        <end position="702"/>
    </location>
</feature>
<feature type="domain" description="TSP type-1 4" evidence="3">
    <location>
        <begin position="784"/>
        <end position="839"/>
    </location>
</feature>
<feature type="domain" description="TSP type-1 5" evidence="3">
    <location>
        <begin position="841"/>
        <end position="896"/>
    </location>
</feature>
<feature type="domain" description="TSP type-1 6" evidence="3">
    <location>
        <begin position="897"/>
        <end position="944"/>
    </location>
</feature>
<feature type="glycosylation site" description="N-linked (GlcNAc...) asparagine" evidence="2">
    <location>
        <position position="147"/>
    </location>
</feature>
<feature type="glycosylation site" description="N-linked (GlcNAc...) asparagine" evidence="2">
    <location>
        <position position="168"/>
    </location>
</feature>
<feature type="glycosylation site" description="N-linked (GlcNAc...) asparagine" evidence="2">
    <location>
        <position position="227"/>
    </location>
</feature>
<feature type="glycosylation site" description="N-linked (GlcNAc...) asparagine" evidence="2">
    <location>
        <position position="277"/>
    </location>
</feature>
<feature type="glycosylation site" description="N-linked (GlcNAc...) asparagine" evidence="2">
    <location>
        <position position="323"/>
    </location>
</feature>
<feature type="glycosylation site" description="N-linked (GlcNAc...) asparagine" evidence="2">
    <location>
        <position position="367"/>
    </location>
</feature>
<feature type="glycosylation site" description="N-linked (GlcNAc...) asparagine" evidence="2">
    <location>
        <position position="536"/>
    </location>
</feature>
<feature type="glycosylation site" description="N-linked (GlcNAc...) asparagine" evidence="2">
    <location>
        <position position="591"/>
    </location>
</feature>
<feature type="glycosylation site" description="N-linked (GlcNAc...) asparagine" evidence="2">
    <location>
        <position position="717"/>
    </location>
</feature>
<feature type="glycosylation site" description="N-linked (GlcNAc...) asparagine" evidence="2">
    <location>
        <position position="898"/>
    </location>
</feature>
<feature type="glycosylation site" description="N-linked (GlcNAc...) asparagine" evidence="2">
    <location>
        <position position="933"/>
    </location>
</feature>
<feature type="glycosylation site" description="N-linked (GlcNAc...) asparagine" evidence="2">
    <location>
        <position position="1015"/>
    </location>
</feature>
<feature type="disulfide bond" evidence="2">
    <location>
        <begin position="104"/>
        <end position="114"/>
    </location>
</feature>
<feature type="disulfide bond" evidence="2">
    <location>
        <begin position="131"/>
        <end position="140"/>
    </location>
</feature>
<feature type="disulfide bond" evidence="2">
    <location>
        <begin position="254"/>
        <end position="357"/>
    </location>
</feature>
<feature type="disulfide bond" evidence="2">
    <location>
        <begin position="278"/>
        <end position="320"/>
    </location>
</feature>
<feature type="disulfide bond" evidence="2">
    <location>
        <begin position="607"/>
        <end position="644"/>
    </location>
</feature>
<feature type="disulfide bond" evidence="2">
    <location>
        <begin position="611"/>
        <end position="650"/>
    </location>
</feature>
<feature type="disulfide bond" evidence="2">
    <location>
        <begin position="622"/>
        <end position="634"/>
    </location>
</feature>
<feature type="disulfide bond" evidence="2">
    <location>
        <begin position="665"/>
        <end position="696"/>
    </location>
</feature>
<feature type="disulfide bond" evidence="2">
    <location>
        <begin position="669"/>
        <end position="701"/>
    </location>
</feature>
<feature type="disulfide bond" evidence="2">
    <location>
        <begin position="680"/>
        <end position="686"/>
    </location>
</feature>
<feature type="disulfide bond" evidence="2">
    <location>
        <begin position="796"/>
        <end position="833"/>
    </location>
</feature>
<feature type="disulfide bond" evidence="2">
    <location>
        <begin position="800"/>
        <end position="838"/>
    </location>
</feature>
<feature type="disulfide bond" evidence="2">
    <location>
        <begin position="811"/>
        <end position="823"/>
    </location>
</feature>
<feature type="disulfide bond" evidence="2">
    <location>
        <begin position="853"/>
        <end position="890"/>
    </location>
</feature>
<feature type="disulfide bond" evidence="2">
    <location>
        <begin position="857"/>
        <end position="895"/>
    </location>
</feature>
<feature type="disulfide bond" evidence="2">
    <location>
        <begin position="868"/>
        <end position="880"/>
    </location>
</feature>
<proteinExistence type="evidence at protein level"/>
<name>SEM5A_RAT</name>
<accession>D3ZTD8</accession>
<reference key="1">
    <citation type="journal article" date="2004" name="Nature">
        <title>Genome sequence of the Brown Norway rat yields insights into mammalian evolution.</title>
        <authorList>
            <person name="Gibbs R.A."/>
            <person name="Weinstock G.M."/>
            <person name="Metzker M.L."/>
            <person name="Muzny D.M."/>
            <person name="Sodergren E.J."/>
            <person name="Scherer S."/>
            <person name="Scott G."/>
            <person name="Steffen D."/>
            <person name="Worley K.C."/>
            <person name="Burch P.E."/>
            <person name="Okwuonu G."/>
            <person name="Hines S."/>
            <person name="Lewis L."/>
            <person name="Deramo C."/>
            <person name="Delgado O."/>
            <person name="Dugan-Rocha S."/>
            <person name="Miner G."/>
            <person name="Morgan M."/>
            <person name="Hawes A."/>
            <person name="Gill R."/>
            <person name="Holt R.A."/>
            <person name="Adams M.D."/>
            <person name="Amanatides P.G."/>
            <person name="Baden-Tillson H."/>
            <person name="Barnstead M."/>
            <person name="Chin S."/>
            <person name="Evans C.A."/>
            <person name="Ferriera S."/>
            <person name="Fosler C."/>
            <person name="Glodek A."/>
            <person name="Gu Z."/>
            <person name="Jennings D."/>
            <person name="Kraft C.L."/>
            <person name="Nguyen T."/>
            <person name="Pfannkoch C.M."/>
            <person name="Sitter C."/>
            <person name="Sutton G.G."/>
            <person name="Venter J.C."/>
            <person name="Woodage T."/>
            <person name="Smith D."/>
            <person name="Lee H.-M."/>
            <person name="Gustafson E."/>
            <person name="Cahill P."/>
            <person name="Kana A."/>
            <person name="Doucette-Stamm L."/>
            <person name="Weinstock K."/>
            <person name="Fechtel K."/>
            <person name="Weiss R.B."/>
            <person name="Dunn D.M."/>
            <person name="Green E.D."/>
            <person name="Blakesley R.W."/>
            <person name="Bouffard G.G."/>
            <person name="De Jong P.J."/>
            <person name="Osoegawa K."/>
            <person name="Zhu B."/>
            <person name="Marra M."/>
            <person name="Schein J."/>
            <person name="Bosdet I."/>
            <person name="Fjell C."/>
            <person name="Jones S."/>
            <person name="Krzywinski M."/>
            <person name="Mathewson C."/>
            <person name="Siddiqui A."/>
            <person name="Wye N."/>
            <person name="McPherson J."/>
            <person name="Zhao S."/>
            <person name="Fraser C.M."/>
            <person name="Shetty J."/>
            <person name="Shatsman S."/>
            <person name="Geer K."/>
            <person name="Chen Y."/>
            <person name="Abramzon S."/>
            <person name="Nierman W.C."/>
            <person name="Havlak P.H."/>
            <person name="Chen R."/>
            <person name="Durbin K.J."/>
            <person name="Egan A."/>
            <person name="Ren Y."/>
            <person name="Song X.-Z."/>
            <person name="Li B."/>
            <person name="Liu Y."/>
            <person name="Qin X."/>
            <person name="Cawley S."/>
            <person name="Cooney A.J."/>
            <person name="D'Souza L.M."/>
            <person name="Martin K."/>
            <person name="Wu J.Q."/>
            <person name="Gonzalez-Garay M.L."/>
            <person name="Jackson A.R."/>
            <person name="Kalafus K.J."/>
            <person name="McLeod M.P."/>
            <person name="Milosavljevic A."/>
            <person name="Virk D."/>
            <person name="Volkov A."/>
            <person name="Wheeler D.A."/>
            <person name="Zhang Z."/>
            <person name="Bailey J.A."/>
            <person name="Eichler E.E."/>
            <person name="Tuzun E."/>
            <person name="Birney E."/>
            <person name="Mongin E."/>
            <person name="Ureta-Vidal A."/>
            <person name="Woodwark C."/>
            <person name="Zdobnov E."/>
            <person name="Bork P."/>
            <person name="Suyama M."/>
            <person name="Torrents D."/>
            <person name="Alexandersson M."/>
            <person name="Trask B.J."/>
            <person name="Young J.M."/>
            <person name="Huang H."/>
            <person name="Wang H."/>
            <person name="Xing H."/>
            <person name="Daniels S."/>
            <person name="Gietzen D."/>
            <person name="Schmidt J."/>
            <person name="Stevens K."/>
            <person name="Vitt U."/>
            <person name="Wingrove J."/>
            <person name="Camara F."/>
            <person name="Mar Alba M."/>
            <person name="Abril J.F."/>
            <person name="Guigo R."/>
            <person name="Smit A."/>
            <person name="Dubchak I."/>
            <person name="Rubin E.M."/>
            <person name="Couronne O."/>
            <person name="Poliakov A."/>
            <person name="Huebner N."/>
            <person name="Ganten D."/>
            <person name="Goesele C."/>
            <person name="Hummel O."/>
            <person name="Kreitler T."/>
            <person name="Lee Y.-A."/>
            <person name="Monti J."/>
            <person name="Schulz H."/>
            <person name="Zimdahl H."/>
            <person name="Himmelbauer H."/>
            <person name="Lehrach H."/>
            <person name="Jacob H.J."/>
            <person name="Bromberg S."/>
            <person name="Gullings-Handley J."/>
            <person name="Jensen-Seaman M.I."/>
            <person name="Kwitek A.E."/>
            <person name="Lazar J."/>
            <person name="Pasko D."/>
            <person name="Tonellato P.J."/>
            <person name="Twigger S."/>
            <person name="Ponting C.P."/>
            <person name="Duarte J.M."/>
            <person name="Rice S."/>
            <person name="Goodstadt L."/>
            <person name="Beatson S.A."/>
            <person name="Emes R.D."/>
            <person name="Winter E.E."/>
            <person name="Webber C."/>
            <person name="Brandt P."/>
            <person name="Nyakatura G."/>
            <person name="Adetobi M."/>
            <person name="Chiaromonte F."/>
            <person name="Elnitski L."/>
            <person name="Eswara P."/>
            <person name="Hardison R.C."/>
            <person name="Hou M."/>
            <person name="Kolbe D."/>
            <person name="Makova K."/>
            <person name="Miller W."/>
            <person name="Nekrutenko A."/>
            <person name="Riemer C."/>
            <person name="Schwartz S."/>
            <person name="Taylor J."/>
            <person name="Yang S."/>
            <person name="Zhang Y."/>
            <person name="Lindpaintner K."/>
            <person name="Andrews T.D."/>
            <person name="Caccamo M."/>
            <person name="Clamp M."/>
            <person name="Clarke L."/>
            <person name="Curwen V."/>
            <person name="Durbin R.M."/>
            <person name="Eyras E."/>
            <person name="Searle S.M."/>
            <person name="Cooper G.M."/>
            <person name="Batzoglou S."/>
            <person name="Brudno M."/>
            <person name="Sidow A."/>
            <person name="Stone E.A."/>
            <person name="Payseur B.A."/>
            <person name="Bourque G."/>
            <person name="Lopez-Otin C."/>
            <person name="Puente X.S."/>
            <person name="Chakrabarti K."/>
            <person name="Chatterji S."/>
            <person name="Dewey C."/>
            <person name="Pachter L."/>
            <person name="Bray N."/>
            <person name="Yap V.B."/>
            <person name="Caspi A."/>
            <person name="Tesler G."/>
            <person name="Pevzner P.A."/>
            <person name="Haussler D."/>
            <person name="Roskin K.M."/>
            <person name="Baertsch R."/>
            <person name="Clawson H."/>
            <person name="Furey T.S."/>
            <person name="Hinrichs A.S."/>
            <person name="Karolchik D."/>
            <person name="Kent W.J."/>
            <person name="Rosenbloom K.R."/>
            <person name="Trumbower H."/>
            <person name="Weirauch M."/>
            <person name="Cooper D.N."/>
            <person name="Stenson P.D."/>
            <person name="Ma B."/>
            <person name="Brent M."/>
            <person name="Arumugam M."/>
            <person name="Shteynberg D."/>
            <person name="Copley R.R."/>
            <person name="Taylor M.S."/>
            <person name="Riethman H."/>
            <person name="Mudunuri U."/>
            <person name="Peterson J."/>
            <person name="Guyer M."/>
            <person name="Felsenfeld A."/>
            <person name="Old S."/>
            <person name="Mockrin S."/>
            <person name="Collins F.S."/>
        </authorList>
    </citation>
    <scope>NUCLEOTIDE SEQUENCE [LARGE SCALE GENOMIC DNA]</scope>
    <source>
        <strain>Brown Norway</strain>
    </source>
</reference>
<reference evidence="8" key="2">
    <citation type="submission" date="2005-07" db="EMBL/GenBank/DDBJ databases">
        <authorList>
            <person name="Mural R.J."/>
            <person name="Adams M.D."/>
            <person name="Myers E.W."/>
            <person name="Smith H.O."/>
            <person name="Venter J.C."/>
        </authorList>
    </citation>
    <scope>NUCLEOTIDE SEQUENCE [LARGE SCALE GENOMIC DNA]</scope>
    <source>
        <strain evidence="8">Brown Norway</strain>
        <strain evidence="8">Sprague-Dawley</strain>
    </source>
</reference>
<reference key="3">
    <citation type="journal article" date="2004" name="Neuron">
        <title>Semaphorin 5A is a bifunctional axon guidance cue regulated by heparan and chondroitin sulfate proteoglycans.</title>
        <authorList>
            <person name="Kantor D.B."/>
            <person name="Chivatakarn O."/>
            <person name="Peer K.L."/>
            <person name="Oster S.F."/>
            <person name="Inatani M."/>
            <person name="Hansen M.J."/>
            <person name="Flanagan J.G."/>
            <person name="Yamaguchi Y."/>
            <person name="Sretavan D.W."/>
            <person name="Giger R.J."/>
            <person name="Kolodkin A.L."/>
        </authorList>
    </citation>
    <scope>FUNCTION</scope>
    <scope>DEVELOPMENTAL STAGE</scope>
</reference>
<reference evidence="7" key="4">
    <citation type="journal article" date="2010" name="J. Biol. Chem.">
        <title>Semaphorin 5A and plexin-B3 inhibit human glioma cell motility through RhoGDIalpha-mediated inactivation of Rac1 GTPase.</title>
        <authorList>
            <person name="Li X."/>
            <person name="Lee A.Y."/>
        </authorList>
    </citation>
    <scope>FUNCTION</scope>
</reference>
<dbReference type="EMBL" id="CH473992">
    <property type="protein sequence ID" value="EDL82657.1"/>
    <property type="molecule type" value="Genomic_DNA"/>
</dbReference>
<dbReference type="RefSeq" id="NP_001101129.1">
    <property type="nucleotide sequence ID" value="NM_001107659.2"/>
</dbReference>
<dbReference type="RefSeq" id="XP_017446322.1">
    <property type="nucleotide sequence ID" value="XM_017590833.1"/>
</dbReference>
<dbReference type="RefSeq" id="XP_063137824.1">
    <property type="nucleotide sequence ID" value="XM_063281754.1"/>
</dbReference>
<dbReference type="RefSeq" id="XP_063137825.1">
    <property type="nucleotide sequence ID" value="XM_063281755.1"/>
</dbReference>
<dbReference type="SMR" id="D3ZTD8"/>
<dbReference type="BioGRID" id="259574">
    <property type="interactions" value="2"/>
</dbReference>
<dbReference type="FunCoup" id="D3ZTD8">
    <property type="interactions" value="712"/>
</dbReference>
<dbReference type="STRING" id="10116.ENSRNOP00000074231"/>
<dbReference type="GlyCosmos" id="D3ZTD8">
    <property type="glycosylation" value="12 sites, No reported glycans"/>
</dbReference>
<dbReference type="GlyGen" id="D3ZTD8">
    <property type="glycosylation" value="12 sites"/>
</dbReference>
<dbReference type="PhosphoSitePlus" id="D3ZTD8"/>
<dbReference type="PaxDb" id="10116-ENSRNOP00000016506"/>
<dbReference type="Ensembl" id="ENSRNOT00000016506.6">
    <property type="protein sequence ID" value="ENSRNOP00000016506.4"/>
    <property type="gene ID" value="ENSRNOG00000011977.7"/>
</dbReference>
<dbReference type="GeneID" id="310207"/>
<dbReference type="KEGG" id="rno:310207"/>
<dbReference type="UCSC" id="RGD:1308650">
    <property type="organism name" value="rat"/>
</dbReference>
<dbReference type="AGR" id="RGD:1308650"/>
<dbReference type="CTD" id="9037"/>
<dbReference type="RGD" id="1308650">
    <property type="gene designation" value="Sema5a"/>
</dbReference>
<dbReference type="eggNOG" id="KOG3611">
    <property type="taxonomic scope" value="Eukaryota"/>
</dbReference>
<dbReference type="GeneTree" id="ENSGT00940000158036"/>
<dbReference type="HOGENOM" id="CLU_005410_1_0_1"/>
<dbReference type="InParanoid" id="D3ZTD8"/>
<dbReference type="OMA" id="YHTRSTC"/>
<dbReference type="OrthoDB" id="9988752at2759"/>
<dbReference type="PhylomeDB" id="D3ZTD8"/>
<dbReference type="TreeFam" id="TF329951"/>
<dbReference type="Reactome" id="R-RNO-416700">
    <property type="pathway name" value="Other semaphorin interactions"/>
</dbReference>
<dbReference type="Reactome" id="R-RNO-5173214">
    <property type="pathway name" value="O-glycosylation of TSR domain-containing proteins"/>
</dbReference>
<dbReference type="PRO" id="PR:D3ZTD8"/>
<dbReference type="Proteomes" id="UP000002494">
    <property type="component" value="Chromosome 2"/>
</dbReference>
<dbReference type="Proteomes" id="UP000234681">
    <property type="component" value="Chromosome 2"/>
</dbReference>
<dbReference type="Bgee" id="ENSRNOG00000011977">
    <property type="expression patterns" value="Expressed in Ammon's horn and 18 other cell types or tissues"/>
</dbReference>
<dbReference type="ExpressionAtlas" id="D3ZTD8">
    <property type="expression patterns" value="baseline and differential"/>
</dbReference>
<dbReference type="GO" id="GO:0016020">
    <property type="term" value="C:membrane"/>
    <property type="evidence" value="ECO:0000314"/>
    <property type="project" value="UniProtKB"/>
</dbReference>
<dbReference type="GO" id="GO:0005886">
    <property type="term" value="C:plasma membrane"/>
    <property type="evidence" value="ECO:0000318"/>
    <property type="project" value="GO_Central"/>
</dbReference>
<dbReference type="GO" id="GO:0008046">
    <property type="term" value="F:axon guidance receptor activity"/>
    <property type="evidence" value="ECO:0000266"/>
    <property type="project" value="RGD"/>
</dbReference>
<dbReference type="GO" id="GO:0045499">
    <property type="term" value="F:chemorepellent activity"/>
    <property type="evidence" value="ECO:0000318"/>
    <property type="project" value="GO_Central"/>
</dbReference>
<dbReference type="GO" id="GO:0035373">
    <property type="term" value="F:chondroitin sulfate proteoglycan binding"/>
    <property type="evidence" value="ECO:0000315"/>
    <property type="project" value="UniProtKB"/>
</dbReference>
<dbReference type="GO" id="GO:0043395">
    <property type="term" value="F:heparan sulfate proteoglycan binding"/>
    <property type="evidence" value="ECO:0000315"/>
    <property type="project" value="UniProtKB"/>
</dbReference>
<dbReference type="GO" id="GO:0030215">
    <property type="term" value="F:semaphorin receptor binding"/>
    <property type="evidence" value="ECO:0000250"/>
    <property type="project" value="UniProtKB"/>
</dbReference>
<dbReference type="GO" id="GO:0045545">
    <property type="term" value="F:syndecan binding"/>
    <property type="evidence" value="ECO:0000353"/>
    <property type="project" value="UniProtKB"/>
</dbReference>
<dbReference type="GO" id="GO:0048675">
    <property type="term" value="P:axon extension"/>
    <property type="evidence" value="ECO:0000266"/>
    <property type="project" value="RGD"/>
</dbReference>
<dbReference type="GO" id="GO:0007411">
    <property type="term" value="P:axon guidance"/>
    <property type="evidence" value="ECO:0000266"/>
    <property type="project" value="RGD"/>
</dbReference>
<dbReference type="GO" id="GO:0007413">
    <property type="term" value="P:axonal fasciculation"/>
    <property type="evidence" value="ECO:0000314"/>
    <property type="project" value="UniProtKB"/>
</dbReference>
<dbReference type="GO" id="GO:0002043">
    <property type="term" value="P:blood vessel endothelial cell proliferation involved in sprouting angiogenesis"/>
    <property type="evidence" value="ECO:0000250"/>
    <property type="project" value="UniProtKB"/>
</dbReference>
<dbReference type="GO" id="GO:0001569">
    <property type="term" value="P:branching involved in blood vessel morphogenesis"/>
    <property type="evidence" value="ECO:0000266"/>
    <property type="project" value="RGD"/>
</dbReference>
<dbReference type="GO" id="GO:0048754">
    <property type="term" value="P:branching morphogenesis of an epithelial tube"/>
    <property type="evidence" value="ECO:0000266"/>
    <property type="project" value="RGD"/>
</dbReference>
<dbReference type="GO" id="GO:0060326">
    <property type="term" value="P:cell chemotaxis"/>
    <property type="evidence" value="ECO:0000250"/>
    <property type="project" value="UniProtKB"/>
</dbReference>
<dbReference type="GO" id="GO:0050908">
    <property type="term" value="P:detection of light stimulus involved in visual perception"/>
    <property type="evidence" value="ECO:0000266"/>
    <property type="project" value="RGD"/>
</dbReference>
<dbReference type="GO" id="GO:0021536">
    <property type="term" value="P:diencephalon development"/>
    <property type="evidence" value="ECO:0000315"/>
    <property type="project" value="UniProtKB"/>
</dbReference>
<dbReference type="GO" id="GO:0048843">
    <property type="term" value="P:negative regulation of axon extension involved in axon guidance"/>
    <property type="evidence" value="ECO:0000315"/>
    <property type="project" value="UniProtKB"/>
</dbReference>
<dbReference type="GO" id="GO:0007162">
    <property type="term" value="P:negative regulation of cell adhesion"/>
    <property type="evidence" value="ECO:0000250"/>
    <property type="project" value="UniProtKB"/>
</dbReference>
<dbReference type="GO" id="GO:2000352">
    <property type="term" value="P:negative regulation of endothelial cell apoptotic process"/>
    <property type="evidence" value="ECO:0000250"/>
    <property type="project" value="UniProtKB"/>
</dbReference>
<dbReference type="GO" id="GO:0001755">
    <property type="term" value="P:neural crest cell migration"/>
    <property type="evidence" value="ECO:0000318"/>
    <property type="project" value="GO_Central"/>
</dbReference>
<dbReference type="GO" id="GO:1990138">
    <property type="term" value="P:neuron projection extension"/>
    <property type="evidence" value="ECO:0000266"/>
    <property type="project" value="RGD"/>
</dbReference>
<dbReference type="GO" id="GO:0097485">
    <property type="term" value="P:neuron projection guidance"/>
    <property type="evidence" value="ECO:0000266"/>
    <property type="project" value="RGD"/>
</dbReference>
<dbReference type="GO" id="GO:0050918">
    <property type="term" value="P:positive chemotaxis"/>
    <property type="evidence" value="ECO:0000250"/>
    <property type="project" value="UniProtKB"/>
</dbReference>
<dbReference type="GO" id="GO:0030836">
    <property type="term" value="P:positive regulation of actin filament depolymerization"/>
    <property type="evidence" value="ECO:0000250"/>
    <property type="project" value="UniProtKB"/>
</dbReference>
<dbReference type="GO" id="GO:0045766">
    <property type="term" value="P:positive regulation of angiogenesis"/>
    <property type="evidence" value="ECO:0000250"/>
    <property type="project" value="UniProtKB"/>
</dbReference>
<dbReference type="GO" id="GO:0048842">
    <property type="term" value="P:positive regulation of axon extension involved in axon guidance"/>
    <property type="evidence" value="ECO:0000315"/>
    <property type="project" value="UniProtKB"/>
</dbReference>
<dbReference type="GO" id="GO:0090263">
    <property type="term" value="P:positive regulation of canonical Wnt signaling pathway"/>
    <property type="evidence" value="ECO:0000250"/>
    <property type="project" value="UniProtKB"/>
</dbReference>
<dbReference type="GO" id="GO:0030335">
    <property type="term" value="P:positive regulation of cell migration"/>
    <property type="evidence" value="ECO:0000318"/>
    <property type="project" value="GO_Central"/>
</dbReference>
<dbReference type="GO" id="GO:2001028">
    <property type="term" value="P:positive regulation of endothelial cell chemotaxis"/>
    <property type="evidence" value="ECO:0000250"/>
    <property type="project" value="UniProtKB"/>
</dbReference>
<dbReference type="GO" id="GO:0001938">
    <property type="term" value="P:positive regulation of endothelial cell proliferation"/>
    <property type="evidence" value="ECO:0000250"/>
    <property type="project" value="UniProtKB"/>
</dbReference>
<dbReference type="GO" id="GO:0051897">
    <property type="term" value="P:positive regulation of phosphatidylinositol 3-kinase/protein kinase B signal transduction"/>
    <property type="evidence" value="ECO:0000250"/>
    <property type="project" value="UniProtKB"/>
</dbReference>
<dbReference type="GO" id="GO:0071526">
    <property type="term" value="P:semaphorin-plexin signaling pathway"/>
    <property type="evidence" value="ECO:0000250"/>
    <property type="project" value="UniProtKB"/>
</dbReference>
<dbReference type="GO" id="GO:1990256">
    <property type="term" value="P:signal clustering"/>
    <property type="evidence" value="ECO:0000315"/>
    <property type="project" value="UniProtKB"/>
</dbReference>
<dbReference type="CDD" id="cd11263">
    <property type="entry name" value="Sema_5A"/>
    <property type="match status" value="1"/>
</dbReference>
<dbReference type="FunFam" id="2.20.100.10:FF:000001">
    <property type="entry name" value="semaphorin-5A isoform X1"/>
    <property type="match status" value="3"/>
</dbReference>
<dbReference type="FunFam" id="2.130.10.10:FF:000048">
    <property type="entry name" value="semaphorin-5B isoform X1"/>
    <property type="match status" value="1"/>
</dbReference>
<dbReference type="FunFam" id="2.20.100.10:FF:000021">
    <property type="entry name" value="semaphorin-5B isoform X1"/>
    <property type="match status" value="1"/>
</dbReference>
<dbReference type="FunFam" id="3.30.1680.10:FF:000003">
    <property type="entry name" value="semaphorin-5B isoform X1"/>
    <property type="match status" value="1"/>
</dbReference>
<dbReference type="FunFam" id="2.20.100.10:FF:000007">
    <property type="entry name" value="Thrombospondin 1"/>
    <property type="match status" value="1"/>
</dbReference>
<dbReference type="Gene3D" id="3.30.1680.10">
    <property type="entry name" value="ligand-binding face of the semaphorins, domain 2"/>
    <property type="match status" value="1"/>
</dbReference>
<dbReference type="Gene3D" id="2.20.100.10">
    <property type="entry name" value="Thrombospondin type-1 (TSP1) repeat"/>
    <property type="match status" value="6"/>
</dbReference>
<dbReference type="Gene3D" id="2.130.10.10">
    <property type="entry name" value="YVTN repeat-like/Quinoprotein amine dehydrogenase"/>
    <property type="match status" value="1"/>
</dbReference>
<dbReference type="InterPro" id="IPR002165">
    <property type="entry name" value="Plexin_repeat"/>
</dbReference>
<dbReference type="InterPro" id="IPR016201">
    <property type="entry name" value="PSI"/>
</dbReference>
<dbReference type="InterPro" id="IPR042821">
    <property type="entry name" value="Sema5A_sema"/>
</dbReference>
<dbReference type="InterPro" id="IPR001627">
    <property type="entry name" value="Semap_dom"/>
</dbReference>
<dbReference type="InterPro" id="IPR036352">
    <property type="entry name" value="Semap_dom_sf"/>
</dbReference>
<dbReference type="InterPro" id="IPR027231">
    <property type="entry name" value="Semaphorin"/>
</dbReference>
<dbReference type="InterPro" id="IPR000884">
    <property type="entry name" value="TSP1_rpt"/>
</dbReference>
<dbReference type="InterPro" id="IPR036383">
    <property type="entry name" value="TSP1_rpt_sf"/>
</dbReference>
<dbReference type="InterPro" id="IPR015943">
    <property type="entry name" value="WD40/YVTN_repeat-like_dom_sf"/>
</dbReference>
<dbReference type="PANTHER" id="PTHR11036">
    <property type="entry name" value="SEMAPHORIN"/>
    <property type="match status" value="1"/>
</dbReference>
<dbReference type="PANTHER" id="PTHR11036:SF78">
    <property type="entry name" value="SEMAPHORIN-5A"/>
    <property type="match status" value="1"/>
</dbReference>
<dbReference type="Pfam" id="PF01437">
    <property type="entry name" value="PSI"/>
    <property type="match status" value="1"/>
</dbReference>
<dbReference type="Pfam" id="PF01403">
    <property type="entry name" value="Sema"/>
    <property type="match status" value="1"/>
</dbReference>
<dbReference type="Pfam" id="PF23260">
    <property type="entry name" value="TSP1_2"/>
    <property type="match status" value="1"/>
</dbReference>
<dbReference type="Pfam" id="PF00090">
    <property type="entry name" value="TSP_1"/>
    <property type="match status" value="6"/>
</dbReference>
<dbReference type="PRINTS" id="PR01705">
    <property type="entry name" value="TSP1REPEAT"/>
</dbReference>
<dbReference type="SMART" id="SM00423">
    <property type="entry name" value="PSI"/>
    <property type="match status" value="1"/>
</dbReference>
<dbReference type="SMART" id="SM00630">
    <property type="entry name" value="Sema"/>
    <property type="match status" value="1"/>
</dbReference>
<dbReference type="SMART" id="SM00209">
    <property type="entry name" value="TSP1"/>
    <property type="match status" value="6"/>
</dbReference>
<dbReference type="SUPFAM" id="SSF103575">
    <property type="entry name" value="Plexin repeat"/>
    <property type="match status" value="1"/>
</dbReference>
<dbReference type="SUPFAM" id="SSF101912">
    <property type="entry name" value="Sema domain"/>
    <property type="match status" value="1"/>
</dbReference>
<dbReference type="SUPFAM" id="SSF82895">
    <property type="entry name" value="TSP-1 type 1 repeat"/>
    <property type="match status" value="6"/>
</dbReference>
<dbReference type="PROSITE" id="PS51004">
    <property type="entry name" value="SEMA"/>
    <property type="match status" value="1"/>
</dbReference>
<dbReference type="PROSITE" id="PS50092">
    <property type="entry name" value="TSP1"/>
    <property type="match status" value="6"/>
</dbReference>
<evidence type="ECO:0000250" key="1">
    <source>
        <dbReference type="UniProtKB" id="Q13591"/>
    </source>
</evidence>
<evidence type="ECO:0000255" key="2"/>
<evidence type="ECO:0000255" key="3">
    <source>
        <dbReference type="PROSITE-ProRule" id="PRU00210"/>
    </source>
</evidence>
<evidence type="ECO:0000255" key="4">
    <source>
        <dbReference type="PROSITE-ProRule" id="PRU00352"/>
    </source>
</evidence>
<evidence type="ECO:0000269" key="5">
    <source>
    </source>
</evidence>
<evidence type="ECO:0000269" key="6">
    <source>
    </source>
</evidence>
<evidence type="ECO:0000305" key="7"/>
<evidence type="ECO:0000312" key="8">
    <source>
        <dbReference type="EMBL" id="EDL82657.1"/>
    </source>
</evidence>
<protein>
    <recommendedName>
        <fullName evidence="1">Semaphorin-5A</fullName>
    </recommendedName>
    <alternativeName>
        <fullName>Semaphorin-F</fullName>
        <shortName>Sema F</shortName>
    </alternativeName>
</protein>
<keyword id="KW-0217">Developmental protein</keyword>
<keyword id="KW-0221">Differentiation</keyword>
<keyword id="KW-1015">Disulfide bond</keyword>
<keyword id="KW-0325">Glycoprotein</keyword>
<keyword id="KW-0472">Membrane</keyword>
<keyword id="KW-0524">Neurogenesis</keyword>
<keyword id="KW-1185">Reference proteome</keyword>
<keyword id="KW-0677">Repeat</keyword>
<keyword id="KW-0732">Signal</keyword>
<keyword id="KW-0812">Transmembrane</keyword>
<keyword id="KW-1133">Transmembrane helix</keyword>
<gene>
    <name type="primary">Sema5a</name>
</gene>
<organism>
    <name type="scientific">Rattus norvegicus</name>
    <name type="common">Rat</name>
    <dbReference type="NCBI Taxonomy" id="10116"/>
    <lineage>
        <taxon>Eukaryota</taxon>
        <taxon>Metazoa</taxon>
        <taxon>Chordata</taxon>
        <taxon>Craniata</taxon>
        <taxon>Vertebrata</taxon>
        <taxon>Euteleostomi</taxon>
        <taxon>Mammalia</taxon>
        <taxon>Eutheria</taxon>
        <taxon>Euarchontoglires</taxon>
        <taxon>Glires</taxon>
        <taxon>Rodentia</taxon>
        <taxon>Myomorpha</taxon>
        <taxon>Muroidea</taxon>
        <taxon>Muridae</taxon>
        <taxon>Murinae</taxon>
        <taxon>Rattus</taxon>
    </lineage>
</organism>
<sequence length="1074" mass="120378">MKGACILAWLFSSLGVWRLARPETQDPAKCQRAEHPVVSYKEIGPWLREFRAENAVDFSRLTFDPGQKELVVGARNYLFRLQLEDLSLIQAVQWECDEATKKACYSKGKSKEECQNYIRVLLVGGDRLFTCGTNAFTPVCTIRSLSNLTEIHDQISGMARCPYSPQHNSTALLTASGELYAATAMDFPGRDPAIYRSLGTLPPLRTAQYNSKWLNEPNFVSSYDIGNFTYFFFRENAVEHDCGKTVFSRAARVCKNDIGGRFLLEDTWTTFMKARLNCSRPGEVPFYYNELQSTFFLPELDLIYGIFTTNVNSIAASAVCVFNLSAISQAFNGPFKYQENSRSAWLPYPNPNPNFQCGTMDQGLYVNLTERNLQDAQKFILMHEVVQPVTTVPSFMEDNSRFSHVAVDVVQGRDTLVHIIYLATDYGTIKKVRAPLSQSSGSCLLEEIELFPERKSEPIRSLKILHSQSVLFVGLQEHVVKIPLKRCHFHQTRGACIGAQDPYCGWDAVMKKCTSLEESLSMTQWDQSVPTCPTRNLTVDGSFGPWSPWTPCTHTDGTAVGSCLCRSRSCDSPAPQCGGWQCEGPRMEITNCSRNGGWTPWTSWSPCSTTCGIGFQVRQRSCSNPTPRHGGRVCVGQNREERYCNEHLLCPPHVFWTGWGPWERCTAQCGGGIQARRRTCENGPDCAGCNVEYQPCNTNACPELKKTTPWTPWTPVNISDNGGHYEQRFRYTCKARLPDPNLLEVGRQRIEMRYCSSDGTSGCSTDGLSGDFLRAGRYSAHTVNGAWSAWTSWSQCSRDCSRGIRNRKRVCNNPEPKYGGMPCLGPSLEFQECNILPCPVDGVWSCWSSWSKCSATCGGGHYMRTRSCTNPAPAYGGDICLGLHTEEALCNTQTCPENWSEWSEWSVCDASGTQVRTRQCILLFPVGSQCSGNTTESRPCVFDSNFIPEVSVARSSSVEEKRCGEFNMFHMMAVGLSSSILGCLLTLLVYTYCQRYQQQSHDATVIHPVSPAALNSSITNHINKLDKYDSVEAIKAFNKNNLILEERNKYFNPHLTGKTYSNAYFTDLNNYDEY</sequence>